<accession>B2K1U4</accession>
<reference key="1">
    <citation type="submission" date="2008-04" db="EMBL/GenBank/DDBJ databases">
        <title>Complete sequence of Yersinia pseudotuberculosis PB1/+.</title>
        <authorList>
            <person name="Copeland A."/>
            <person name="Lucas S."/>
            <person name="Lapidus A."/>
            <person name="Glavina del Rio T."/>
            <person name="Dalin E."/>
            <person name="Tice H."/>
            <person name="Bruce D."/>
            <person name="Goodwin L."/>
            <person name="Pitluck S."/>
            <person name="Munk A.C."/>
            <person name="Brettin T."/>
            <person name="Detter J.C."/>
            <person name="Han C."/>
            <person name="Tapia R."/>
            <person name="Schmutz J."/>
            <person name="Larimer F."/>
            <person name="Land M."/>
            <person name="Hauser L."/>
            <person name="Challacombe J.F."/>
            <person name="Green L."/>
            <person name="Lindler L.E."/>
            <person name="Nikolich M.P."/>
            <person name="Richardson P."/>
        </authorList>
    </citation>
    <scope>NUCLEOTIDE SEQUENCE [LARGE SCALE GENOMIC DNA]</scope>
    <source>
        <strain>PB1/+</strain>
    </source>
</reference>
<evidence type="ECO:0000255" key="1">
    <source>
        <dbReference type="HAMAP-Rule" id="MF_01635"/>
    </source>
</evidence>
<keyword id="KW-0997">Cell inner membrane</keyword>
<keyword id="KW-1003">Cell membrane</keyword>
<keyword id="KW-0460">Magnesium</keyword>
<keyword id="KW-0472">Membrane</keyword>
<keyword id="KW-0808">Transferase</keyword>
<keyword id="KW-0812">Transmembrane</keyword>
<keyword id="KW-1133">Transmembrane helix</keyword>
<keyword id="KW-0831">Ubiquinone biosynthesis</keyword>
<gene>
    <name evidence="1" type="primary">ubiA</name>
    <name type="ordered locus">YPTS_0390</name>
</gene>
<dbReference type="EC" id="2.5.1.39" evidence="1"/>
<dbReference type="EMBL" id="CP001048">
    <property type="protein sequence ID" value="ACC87379.1"/>
    <property type="molecule type" value="Genomic_DNA"/>
</dbReference>
<dbReference type="RefSeq" id="WP_012413438.1">
    <property type="nucleotide sequence ID" value="NZ_CP009780.1"/>
</dbReference>
<dbReference type="SMR" id="B2K1U4"/>
<dbReference type="KEGG" id="ypb:YPTS_0390"/>
<dbReference type="PATRIC" id="fig|502801.10.peg.4068"/>
<dbReference type="UniPathway" id="UPA00232"/>
<dbReference type="GO" id="GO:0005886">
    <property type="term" value="C:plasma membrane"/>
    <property type="evidence" value="ECO:0007669"/>
    <property type="project" value="UniProtKB-SubCell"/>
</dbReference>
<dbReference type="GO" id="GO:0008412">
    <property type="term" value="F:4-hydroxybenzoate polyprenyltransferase activity"/>
    <property type="evidence" value="ECO:0007669"/>
    <property type="project" value="UniProtKB-UniRule"/>
</dbReference>
<dbReference type="GO" id="GO:0006744">
    <property type="term" value="P:ubiquinone biosynthetic process"/>
    <property type="evidence" value="ECO:0007669"/>
    <property type="project" value="UniProtKB-UniRule"/>
</dbReference>
<dbReference type="CDD" id="cd13959">
    <property type="entry name" value="PT_UbiA_COQ2"/>
    <property type="match status" value="1"/>
</dbReference>
<dbReference type="FunFam" id="1.10.357.140:FF:000002">
    <property type="entry name" value="4-hydroxybenzoate octaprenyltransferase"/>
    <property type="match status" value="1"/>
</dbReference>
<dbReference type="FunFam" id="1.20.120.1780:FF:000001">
    <property type="entry name" value="4-hydroxybenzoate octaprenyltransferase"/>
    <property type="match status" value="1"/>
</dbReference>
<dbReference type="Gene3D" id="1.10.357.140">
    <property type="entry name" value="UbiA prenyltransferase"/>
    <property type="match status" value="1"/>
</dbReference>
<dbReference type="Gene3D" id="1.20.120.1780">
    <property type="entry name" value="UbiA prenyltransferase"/>
    <property type="match status" value="1"/>
</dbReference>
<dbReference type="HAMAP" id="MF_01635">
    <property type="entry name" value="UbiA"/>
    <property type="match status" value="1"/>
</dbReference>
<dbReference type="InterPro" id="IPR006370">
    <property type="entry name" value="HB_polyprenyltransferase-like"/>
</dbReference>
<dbReference type="InterPro" id="IPR039653">
    <property type="entry name" value="Prenyltransferase"/>
</dbReference>
<dbReference type="InterPro" id="IPR000537">
    <property type="entry name" value="UbiA_prenyltransferase"/>
</dbReference>
<dbReference type="InterPro" id="IPR030470">
    <property type="entry name" value="UbiA_prenylTrfase_CS"/>
</dbReference>
<dbReference type="InterPro" id="IPR044878">
    <property type="entry name" value="UbiA_sf"/>
</dbReference>
<dbReference type="NCBIfam" id="TIGR01474">
    <property type="entry name" value="ubiA_proteo"/>
    <property type="match status" value="1"/>
</dbReference>
<dbReference type="PANTHER" id="PTHR11048:SF28">
    <property type="entry name" value="4-HYDROXYBENZOATE POLYPRENYLTRANSFERASE, MITOCHONDRIAL"/>
    <property type="match status" value="1"/>
</dbReference>
<dbReference type="PANTHER" id="PTHR11048">
    <property type="entry name" value="PRENYLTRANSFERASES"/>
    <property type="match status" value="1"/>
</dbReference>
<dbReference type="Pfam" id="PF01040">
    <property type="entry name" value="UbiA"/>
    <property type="match status" value="1"/>
</dbReference>
<dbReference type="PROSITE" id="PS00943">
    <property type="entry name" value="UBIA"/>
    <property type="match status" value="1"/>
</dbReference>
<name>UBIA_YERPB</name>
<proteinExistence type="inferred from homology"/>
<feature type="chain" id="PRO_1000186701" description="4-hydroxybenzoate octaprenyltransferase">
    <location>
        <begin position="1"/>
        <end position="288"/>
    </location>
</feature>
<feature type="transmembrane region" description="Helical" evidence="1">
    <location>
        <begin position="23"/>
        <end position="43"/>
    </location>
</feature>
<feature type="transmembrane region" description="Helical" evidence="1">
    <location>
        <begin position="46"/>
        <end position="66"/>
    </location>
</feature>
<feature type="transmembrane region" description="Helical" evidence="1">
    <location>
        <begin position="98"/>
        <end position="118"/>
    </location>
</feature>
<feature type="transmembrane region" description="Helical" evidence="1">
    <location>
        <begin position="141"/>
        <end position="161"/>
    </location>
</feature>
<feature type="transmembrane region" description="Helical" evidence="1">
    <location>
        <begin position="163"/>
        <end position="183"/>
    </location>
</feature>
<feature type="transmembrane region" description="Helical" evidence="1">
    <location>
        <begin position="213"/>
        <end position="233"/>
    </location>
</feature>
<feature type="transmembrane region" description="Helical" evidence="1">
    <location>
        <begin position="234"/>
        <end position="254"/>
    </location>
</feature>
<feature type="transmembrane region" description="Helical" evidence="1">
    <location>
        <begin position="268"/>
        <end position="288"/>
    </location>
</feature>
<sequence>MKGSTVHTKWQAYCRLMRIDKPIGSLLLLWPTLWALWLAGRGIPEAKILVVFVLGVFFMRAAGCVVNDYADRHIDSFVKRTASRPLPSGTISEKESKILFVVLILLSFGLVLTLNSMTIWLSLAALALAWIYPFMKRVTHLPQVVLGAAFGWSIPMGFAAVSESLPLVCWLLLLANICWTVAYDTQYAMVDRDDDLRIGVKSTAILFGQHDKLIIGLLQLATLLLMVAIGWLMNLGGAFYWSILLAGALFTHQQKMIAQREREPCFRAFLNNNYVGLVLFLGILISYW</sequence>
<comment type="function">
    <text evidence="1">Catalyzes the prenylation of para-hydroxybenzoate (PHB) with an all-trans polyprenyl group. Mediates the second step in the final reaction sequence of ubiquinone-8 (UQ-8) biosynthesis, which is the condensation of the polyisoprenoid side chain with PHB, generating the first membrane-bound Q intermediate 3-octaprenyl-4-hydroxybenzoate.</text>
</comment>
<comment type="catalytic activity">
    <reaction evidence="1">
        <text>all-trans-octaprenyl diphosphate + 4-hydroxybenzoate = 4-hydroxy-3-(all-trans-octaprenyl)benzoate + diphosphate</text>
        <dbReference type="Rhea" id="RHEA:27782"/>
        <dbReference type="ChEBI" id="CHEBI:1617"/>
        <dbReference type="ChEBI" id="CHEBI:17879"/>
        <dbReference type="ChEBI" id="CHEBI:33019"/>
        <dbReference type="ChEBI" id="CHEBI:57711"/>
        <dbReference type="EC" id="2.5.1.39"/>
    </reaction>
</comment>
<comment type="cofactor">
    <cofactor evidence="1">
        <name>Mg(2+)</name>
        <dbReference type="ChEBI" id="CHEBI:18420"/>
    </cofactor>
</comment>
<comment type="pathway">
    <text evidence="1">Cofactor biosynthesis; ubiquinone biosynthesis.</text>
</comment>
<comment type="subcellular location">
    <subcellularLocation>
        <location evidence="1">Cell inner membrane</location>
        <topology evidence="1">Multi-pass membrane protein</topology>
    </subcellularLocation>
</comment>
<comment type="similarity">
    <text evidence="1">Belongs to the UbiA prenyltransferase family.</text>
</comment>
<protein>
    <recommendedName>
        <fullName evidence="1">4-hydroxybenzoate octaprenyltransferase</fullName>
        <ecNumber evidence="1">2.5.1.39</ecNumber>
    </recommendedName>
    <alternativeName>
        <fullName evidence="1">4-HB polyprenyltransferase</fullName>
    </alternativeName>
</protein>
<organism>
    <name type="scientific">Yersinia pseudotuberculosis serotype IB (strain PB1/+)</name>
    <dbReference type="NCBI Taxonomy" id="502801"/>
    <lineage>
        <taxon>Bacteria</taxon>
        <taxon>Pseudomonadati</taxon>
        <taxon>Pseudomonadota</taxon>
        <taxon>Gammaproteobacteria</taxon>
        <taxon>Enterobacterales</taxon>
        <taxon>Yersiniaceae</taxon>
        <taxon>Yersinia</taxon>
    </lineage>
</organism>